<feature type="chain" id="PRO_1000001777" description="Phosphate acyltransferase">
    <location>
        <begin position="1"/>
        <end position="330"/>
    </location>
</feature>
<evidence type="ECO:0000255" key="1">
    <source>
        <dbReference type="HAMAP-Rule" id="MF_00019"/>
    </source>
</evidence>
<reference key="1">
    <citation type="journal article" date="2006" name="Proc. Natl. Acad. Sci. U.S.A.">
        <title>Comparative genomics of the lactic acid bacteria.</title>
        <authorList>
            <person name="Makarova K.S."/>
            <person name="Slesarev A."/>
            <person name="Wolf Y.I."/>
            <person name="Sorokin A."/>
            <person name="Mirkin B."/>
            <person name="Koonin E.V."/>
            <person name="Pavlov A."/>
            <person name="Pavlova N."/>
            <person name="Karamychev V."/>
            <person name="Polouchine N."/>
            <person name="Shakhova V."/>
            <person name="Grigoriev I."/>
            <person name="Lou Y."/>
            <person name="Rohksar D."/>
            <person name="Lucas S."/>
            <person name="Huang K."/>
            <person name="Goodstein D.M."/>
            <person name="Hawkins T."/>
            <person name="Plengvidhya V."/>
            <person name="Welker D."/>
            <person name="Hughes J."/>
            <person name="Goh Y."/>
            <person name="Benson A."/>
            <person name="Baldwin K."/>
            <person name="Lee J.-H."/>
            <person name="Diaz-Muniz I."/>
            <person name="Dosti B."/>
            <person name="Smeianov V."/>
            <person name="Wechter W."/>
            <person name="Barabote R."/>
            <person name="Lorca G."/>
            <person name="Altermann E."/>
            <person name="Barrangou R."/>
            <person name="Ganesan B."/>
            <person name="Xie Y."/>
            <person name="Rawsthorne H."/>
            <person name="Tamir D."/>
            <person name="Parker C."/>
            <person name="Breidt F."/>
            <person name="Broadbent J.R."/>
            <person name="Hutkins R."/>
            <person name="O'Sullivan D."/>
            <person name="Steele J."/>
            <person name="Unlu G."/>
            <person name="Saier M.H. Jr."/>
            <person name="Klaenhammer T."/>
            <person name="Richardson P."/>
            <person name="Kozyavkin S."/>
            <person name="Weimer B.C."/>
            <person name="Mills D.A."/>
        </authorList>
    </citation>
    <scope>NUCLEOTIDE SEQUENCE [LARGE SCALE GENOMIC DNA]</scope>
    <source>
        <strain>ATCC BAA-365 / Lb-18</strain>
    </source>
</reference>
<keyword id="KW-0963">Cytoplasm</keyword>
<keyword id="KW-0444">Lipid biosynthesis</keyword>
<keyword id="KW-0443">Lipid metabolism</keyword>
<keyword id="KW-0594">Phospholipid biosynthesis</keyword>
<keyword id="KW-1208">Phospholipid metabolism</keyword>
<keyword id="KW-0808">Transferase</keyword>
<sequence>MRKIAIDAMGGENAPEAIVEAVLKAKPELPEDKFIFFGDEGKMKELLPADDDQIEIVATTEVILDEDEPVKAMRTKKDSSMVVAANWVKEGKADALLSLGNTGALLTCGIFIVGRIKGVARPGLMPTMPVESSDDGFNIIDVGANATSKPEYLLQWAEMASCYAEKVRGVSKPRVALLNNGAEFDKGDDLHKEVYQLLQDSSLNFTGNIEGHELLQGKADVVVTDGFTGNAVLKSIEGTGSVIIHMLKDGLLNNGVKAKLGALLAKDALKSVASRFDKDKYGGAVLLGLNSPVVKQHGRSDARAVYYAVKQIDKILTEDLTNTFKQEFSK</sequence>
<comment type="function">
    <text evidence="1">Catalyzes the reversible formation of acyl-phosphate (acyl-PO(4)) from acyl-[acyl-carrier-protein] (acyl-ACP). This enzyme utilizes acyl-ACP as fatty acyl donor, but not acyl-CoA.</text>
</comment>
<comment type="catalytic activity">
    <reaction evidence="1">
        <text>a fatty acyl-[ACP] + phosphate = an acyl phosphate + holo-[ACP]</text>
        <dbReference type="Rhea" id="RHEA:42292"/>
        <dbReference type="Rhea" id="RHEA-COMP:9685"/>
        <dbReference type="Rhea" id="RHEA-COMP:14125"/>
        <dbReference type="ChEBI" id="CHEBI:43474"/>
        <dbReference type="ChEBI" id="CHEBI:59918"/>
        <dbReference type="ChEBI" id="CHEBI:64479"/>
        <dbReference type="ChEBI" id="CHEBI:138651"/>
        <dbReference type="EC" id="2.3.1.274"/>
    </reaction>
</comment>
<comment type="pathway">
    <text evidence="1">Lipid metabolism; phospholipid metabolism.</text>
</comment>
<comment type="subunit">
    <text evidence="1">Homodimer. Probably interacts with PlsY.</text>
</comment>
<comment type="subcellular location">
    <subcellularLocation>
        <location evidence="1">Cytoplasm</location>
    </subcellularLocation>
    <text evidence="1">Associated with the membrane possibly through PlsY.</text>
</comment>
<comment type="similarity">
    <text evidence="1">Belongs to the PlsX family.</text>
</comment>
<accession>Q049Q4</accession>
<gene>
    <name evidence="1" type="primary">plsX</name>
    <name type="ordered locus">LBUL_1295</name>
</gene>
<organism>
    <name type="scientific">Lactobacillus delbrueckii subsp. bulgaricus (strain ATCC BAA-365 / Lb-18)</name>
    <dbReference type="NCBI Taxonomy" id="321956"/>
    <lineage>
        <taxon>Bacteria</taxon>
        <taxon>Bacillati</taxon>
        <taxon>Bacillota</taxon>
        <taxon>Bacilli</taxon>
        <taxon>Lactobacillales</taxon>
        <taxon>Lactobacillaceae</taxon>
        <taxon>Lactobacillus</taxon>
    </lineage>
</organism>
<name>PLSX_LACDB</name>
<protein>
    <recommendedName>
        <fullName evidence="1">Phosphate acyltransferase</fullName>
        <ecNumber evidence="1">2.3.1.274</ecNumber>
    </recommendedName>
    <alternativeName>
        <fullName evidence="1">Acyl-ACP phosphotransacylase</fullName>
    </alternativeName>
    <alternativeName>
        <fullName evidence="1">Acyl-[acyl-carrier-protein]--phosphate acyltransferase</fullName>
    </alternativeName>
    <alternativeName>
        <fullName evidence="1">Phosphate-acyl-ACP acyltransferase</fullName>
    </alternativeName>
</protein>
<proteinExistence type="inferred from homology"/>
<dbReference type="EC" id="2.3.1.274" evidence="1"/>
<dbReference type="EMBL" id="CP000412">
    <property type="protein sequence ID" value="ABJ58818.1"/>
    <property type="molecule type" value="Genomic_DNA"/>
</dbReference>
<dbReference type="RefSeq" id="WP_003618487.1">
    <property type="nucleotide sequence ID" value="NC_008529.1"/>
</dbReference>
<dbReference type="SMR" id="Q049Q4"/>
<dbReference type="KEGG" id="lbu:LBUL_1295"/>
<dbReference type="HOGENOM" id="CLU_039379_1_1_9"/>
<dbReference type="BioCyc" id="LDEL321956:LBUL_RS06100-MONOMER"/>
<dbReference type="UniPathway" id="UPA00085"/>
<dbReference type="GO" id="GO:0005737">
    <property type="term" value="C:cytoplasm"/>
    <property type="evidence" value="ECO:0007669"/>
    <property type="project" value="UniProtKB-SubCell"/>
</dbReference>
<dbReference type="GO" id="GO:0043811">
    <property type="term" value="F:phosphate:acyl-[acyl carrier protein] acyltransferase activity"/>
    <property type="evidence" value="ECO:0007669"/>
    <property type="project" value="UniProtKB-UniRule"/>
</dbReference>
<dbReference type="GO" id="GO:0006633">
    <property type="term" value="P:fatty acid biosynthetic process"/>
    <property type="evidence" value="ECO:0007669"/>
    <property type="project" value="UniProtKB-UniRule"/>
</dbReference>
<dbReference type="GO" id="GO:0008654">
    <property type="term" value="P:phospholipid biosynthetic process"/>
    <property type="evidence" value="ECO:0007669"/>
    <property type="project" value="UniProtKB-KW"/>
</dbReference>
<dbReference type="Gene3D" id="3.40.718.10">
    <property type="entry name" value="Isopropylmalate Dehydrogenase"/>
    <property type="match status" value="1"/>
</dbReference>
<dbReference type="HAMAP" id="MF_00019">
    <property type="entry name" value="PlsX"/>
    <property type="match status" value="1"/>
</dbReference>
<dbReference type="InterPro" id="IPR003664">
    <property type="entry name" value="FA_synthesis"/>
</dbReference>
<dbReference type="InterPro" id="IPR012281">
    <property type="entry name" value="Phospholipid_synth_PlsX-like"/>
</dbReference>
<dbReference type="NCBIfam" id="TIGR00182">
    <property type="entry name" value="plsX"/>
    <property type="match status" value="1"/>
</dbReference>
<dbReference type="PANTHER" id="PTHR30100">
    <property type="entry name" value="FATTY ACID/PHOSPHOLIPID SYNTHESIS PROTEIN PLSX"/>
    <property type="match status" value="1"/>
</dbReference>
<dbReference type="PANTHER" id="PTHR30100:SF1">
    <property type="entry name" value="PHOSPHATE ACYLTRANSFERASE"/>
    <property type="match status" value="1"/>
</dbReference>
<dbReference type="Pfam" id="PF02504">
    <property type="entry name" value="FA_synthesis"/>
    <property type="match status" value="1"/>
</dbReference>
<dbReference type="PIRSF" id="PIRSF002465">
    <property type="entry name" value="Phsphlp_syn_PlsX"/>
    <property type="match status" value="1"/>
</dbReference>
<dbReference type="SUPFAM" id="SSF53659">
    <property type="entry name" value="Isocitrate/Isopropylmalate dehydrogenase-like"/>
    <property type="match status" value="1"/>
</dbReference>